<sequence length="389" mass="42873">MSNLKNFLFTSESVSEGHPDKVSDRISDMVVDSFLSGDPFSRVACETLTTTNKVVLAGEVRGPSIKEEDLIQKVRECIKDIGYDQDGFTWREATKIESHLHAQSADIAMGVDSSSNKDEGAGDQGIMFGYACNETEELMPAPIHYSHKILRLMAEDRKSGKLKNIEPDSKSQVTFEYVDGKPTKVKSVVISSQHSADVDQAKVRELLKPYLLKSIPEKFLKDFNEEELYINPTGNFVIGGPDGDCGLTGRKIIVDTYGGAAPHGGGAFSGKDPTKVDRSAAYAARYIAKNIVASNIAEKCLIQLAYAIGVSKPLSIYVDLFDNDLEKNKFVTEKISENFDLSPRGIREMLGLNKPIYEKTAAYGHFGRVPEANGSFSWEKTDKKDVFSK</sequence>
<feature type="chain" id="PRO_0000241012" description="S-adenosylmethionine synthase">
    <location>
        <begin position="1"/>
        <end position="389"/>
    </location>
</feature>
<feature type="region of interest" description="Flexible loop" evidence="1">
    <location>
        <begin position="103"/>
        <end position="113"/>
    </location>
</feature>
<feature type="binding site" description="in other chain" evidence="1">
    <location>
        <position position="18"/>
    </location>
    <ligand>
        <name>ATP</name>
        <dbReference type="ChEBI" id="CHEBI:30616"/>
        <note>ligand shared between two neighboring subunits</note>
    </ligand>
</feature>
<feature type="binding site" evidence="1">
    <location>
        <position position="20"/>
    </location>
    <ligand>
        <name>Mg(2+)</name>
        <dbReference type="ChEBI" id="CHEBI:18420"/>
    </ligand>
</feature>
<feature type="binding site" evidence="1">
    <location>
        <position position="46"/>
    </location>
    <ligand>
        <name>K(+)</name>
        <dbReference type="ChEBI" id="CHEBI:29103"/>
    </ligand>
</feature>
<feature type="binding site" description="in other chain" evidence="1">
    <location>
        <position position="59"/>
    </location>
    <ligand>
        <name>L-methionine</name>
        <dbReference type="ChEBI" id="CHEBI:57844"/>
        <note>ligand shared between two neighboring subunits</note>
    </ligand>
</feature>
<feature type="binding site" description="in other chain" evidence="1">
    <location>
        <position position="103"/>
    </location>
    <ligand>
        <name>L-methionine</name>
        <dbReference type="ChEBI" id="CHEBI:57844"/>
        <note>ligand shared between two neighboring subunits</note>
    </ligand>
</feature>
<feature type="binding site" description="in other chain" evidence="1">
    <location>
        <begin position="168"/>
        <end position="170"/>
    </location>
    <ligand>
        <name>ATP</name>
        <dbReference type="ChEBI" id="CHEBI:30616"/>
        <note>ligand shared between two neighboring subunits</note>
    </ligand>
</feature>
<feature type="binding site" evidence="1">
    <location>
        <position position="244"/>
    </location>
    <ligand>
        <name>ATP</name>
        <dbReference type="ChEBI" id="CHEBI:30616"/>
        <note>ligand shared between two neighboring subunits</note>
    </ligand>
</feature>
<feature type="binding site" evidence="1">
    <location>
        <position position="244"/>
    </location>
    <ligand>
        <name>L-methionine</name>
        <dbReference type="ChEBI" id="CHEBI:57844"/>
        <note>ligand shared between two neighboring subunits</note>
    </ligand>
</feature>
<feature type="binding site" description="in other chain" evidence="1">
    <location>
        <begin position="250"/>
        <end position="251"/>
    </location>
    <ligand>
        <name>ATP</name>
        <dbReference type="ChEBI" id="CHEBI:30616"/>
        <note>ligand shared between two neighboring subunits</note>
    </ligand>
</feature>
<feature type="binding site" evidence="1">
    <location>
        <position position="267"/>
    </location>
    <ligand>
        <name>ATP</name>
        <dbReference type="ChEBI" id="CHEBI:30616"/>
        <note>ligand shared between two neighboring subunits</note>
    </ligand>
</feature>
<feature type="binding site" evidence="1">
    <location>
        <position position="271"/>
    </location>
    <ligand>
        <name>ATP</name>
        <dbReference type="ChEBI" id="CHEBI:30616"/>
        <note>ligand shared between two neighboring subunits</note>
    </ligand>
</feature>
<feature type="binding site" description="in other chain" evidence="1">
    <location>
        <position position="275"/>
    </location>
    <ligand>
        <name>L-methionine</name>
        <dbReference type="ChEBI" id="CHEBI:57844"/>
        <note>ligand shared between two neighboring subunits</note>
    </ligand>
</feature>
<comment type="function">
    <text evidence="1">Catalyzes the formation of S-adenosylmethionine (AdoMet) from methionine and ATP. The overall synthetic reaction is composed of two sequential steps, AdoMet formation and the subsequent tripolyphosphate hydrolysis which occurs prior to release of AdoMet from the enzyme.</text>
</comment>
<comment type="catalytic activity">
    <reaction evidence="1">
        <text>L-methionine + ATP + H2O = S-adenosyl-L-methionine + phosphate + diphosphate</text>
        <dbReference type="Rhea" id="RHEA:21080"/>
        <dbReference type="ChEBI" id="CHEBI:15377"/>
        <dbReference type="ChEBI" id="CHEBI:30616"/>
        <dbReference type="ChEBI" id="CHEBI:33019"/>
        <dbReference type="ChEBI" id="CHEBI:43474"/>
        <dbReference type="ChEBI" id="CHEBI:57844"/>
        <dbReference type="ChEBI" id="CHEBI:59789"/>
        <dbReference type="EC" id="2.5.1.6"/>
    </reaction>
</comment>
<comment type="cofactor">
    <cofactor evidence="1">
        <name>Mg(2+)</name>
        <dbReference type="ChEBI" id="CHEBI:18420"/>
    </cofactor>
    <text evidence="1">Binds 2 divalent ions per subunit.</text>
</comment>
<comment type="cofactor">
    <cofactor evidence="1">
        <name>K(+)</name>
        <dbReference type="ChEBI" id="CHEBI:29103"/>
    </cofactor>
    <text evidence="1">Binds 1 potassium ion per subunit.</text>
</comment>
<comment type="pathway">
    <text evidence="1">Amino-acid biosynthesis; S-adenosyl-L-methionine biosynthesis; S-adenosyl-L-methionine from L-methionine: step 1/1.</text>
</comment>
<comment type="subunit">
    <text evidence="1">Homotetramer; dimer of dimers.</text>
</comment>
<comment type="subcellular location">
    <subcellularLocation>
        <location evidence="1">Cytoplasm</location>
    </subcellularLocation>
</comment>
<comment type="similarity">
    <text evidence="1">Belongs to the AdoMet synthase family.</text>
</comment>
<accession>Q4FNN1</accession>
<dbReference type="EC" id="2.5.1.6" evidence="1"/>
<dbReference type="EMBL" id="CP000084">
    <property type="protein sequence ID" value="AAZ21208.1"/>
    <property type="molecule type" value="Genomic_DNA"/>
</dbReference>
<dbReference type="RefSeq" id="WP_006997520.1">
    <property type="nucleotide sequence ID" value="NC_007205.1"/>
</dbReference>
<dbReference type="SMR" id="Q4FNN1"/>
<dbReference type="STRING" id="335992.SAR11_0387"/>
<dbReference type="GeneID" id="66294884"/>
<dbReference type="KEGG" id="pub:SAR11_0387"/>
<dbReference type="eggNOG" id="COG0192">
    <property type="taxonomic scope" value="Bacteria"/>
</dbReference>
<dbReference type="HOGENOM" id="CLU_041802_1_1_5"/>
<dbReference type="OrthoDB" id="9801686at2"/>
<dbReference type="UniPathway" id="UPA00315">
    <property type="reaction ID" value="UER00080"/>
</dbReference>
<dbReference type="Proteomes" id="UP000002528">
    <property type="component" value="Chromosome"/>
</dbReference>
<dbReference type="GO" id="GO:0005737">
    <property type="term" value="C:cytoplasm"/>
    <property type="evidence" value="ECO:0007669"/>
    <property type="project" value="UniProtKB-SubCell"/>
</dbReference>
<dbReference type="GO" id="GO:0005524">
    <property type="term" value="F:ATP binding"/>
    <property type="evidence" value="ECO:0007669"/>
    <property type="project" value="UniProtKB-UniRule"/>
</dbReference>
<dbReference type="GO" id="GO:0000287">
    <property type="term" value="F:magnesium ion binding"/>
    <property type="evidence" value="ECO:0007669"/>
    <property type="project" value="UniProtKB-UniRule"/>
</dbReference>
<dbReference type="GO" id="GO:0004478">
    <property type="term" value="F:methionine adenosyltransferase activity"/>
    <property type="evidence" value="ECO:0007669"/>
    <property type="project" value="UniProtKB-UniRule"/>
</dbReference>
<dbReference type="GO" id="GO:0006730">
    <property type="term" value="P:one-carbon metabolic process"/>
    <property type="evidence" value="ECO:0007669"/>
    <property type="project" value="UniProtKB-KW"/>
</dbReference>
<dbReference type="GO" id="GO:0006556">
    <property type="term" value="P:S-adenosylmethionine biosynthetic process"/>
    <property type="evidence" value="ECO:0007669"/>
    <property type="project" value="UniProtKB-UniRule"/>
</dbReference>
<dbReference type="CDD" id="cd18079">
    <property type="entry name" value="S-AdoMet_synt"/>
    <property type="match status" value="1"/>
</dbReference>
<dbReference type="FunFam" id="3.30.300.10:FF:000003">
    <property type="entry name" value="S-adenosylmethionine synthase"/>
    <property type="match status" value="1"/>
</dbReference>
<dbReference type="Gene3D" id="3.30.300.10">
    <property type="match status" value="3"/>
</dbReference>
<dbReference type="HAMAP" id="MF_00086">
    <property type="entry name" value="S_AdoMet_synth1"/>
    <property type="match status" value="1"/>
</dbReference>
<dbReference type="InterPro" id="IPR022631">
    <property type="entry name" value="ADOMET_SYNTHASE_CS"/>
</dbReference>
<dbReference type="InterPro" id="IPR022630">
    <property type="entry name" value="S-AdoMet_synt_C"/>
</dbReference>
<dbReference type="InterPro" id="IPR022629">
    <property type="entry name" value="S-AdoMet_synt_central"/>
</dbReference>
<dbReference type="InterPro" id="IPR022628">
    <property type="entry name" value="S-AdoMet_synt_N"/>
</dbReference>
<dbReference type="InterPro" id="IPR002133">
    <property type="entry name" value="S-AdoMet_synthetase"/>
</dbReference>
<dbReference type="InterPro" id="IPR022636">
    <property type="entry name" value="S-AdoMet_synthetase_sfam"/>
</dbReference>
<dbReference type="NCBIfam" id="TIGR01034">
    <property type="entry name" value="metK"/>
    <property type="match status" value="1"/>
</dbReference>
<dbReference type="PANTHER" id="PTHR11964">
    <property type="entry name" value="S-ADENOSYLMETHIONINE SYNTHETASE"/>
    <property type="match status" value="1"/>
</dbReference>
<dbReference type="Pfam" id="PF02773">
    <property type="entry name" value="S-AdoMet_synt_C"/>
    <property type="match status" value="1"/>
</dbReference>
<dbReference type="Pfam" id="PF02772">
    <property type="entry name" value="S-AdoMet_synt_M"/>
    <property type="match status" value="1"/>
</dbReference>
<dbReference type="Pfam" id="PF00438">
    <property type="entry name" value="S-AdoMet_synt_N"/>
    <property type="match status" value="1"/>
</dbReference>
<dbReference type="PIRSF" id="PIRSF000497">
    <property type="entry name" value="MAT"/>
    <property type="match status" value="1"/>
</dbReference>
<dbReference type="SUPFAM" id="SSF55973">
    <property type="entry name" value="S-adenosylmethionine synthetase"/>
    <property type="match status" value="3"/>
</dbReference>
<dbReference type="PROSITE" id="PS00376">
    <property type="entry name" value="ADOMET_SYNTHASE_1"/>
    <property type="match status" value="1"/>
</dbReference>
<dbReference type="PROSITE" id="PS00377">
    <property type="entry name" value="ADOMET_SYNTHASE_2"/>
    <property type="match status" value="1"/>
</dbReference>
<organism>
    <name type="scientific">Pelagibacter ubique (strain HTCC1062)</name>
    <dbReference type="NCBI Taxonomy" id="335992"/>
    <lineage>
        <taxon>Bacteria</taxon>
        <taxon>Pseudomonadati</taxon>
        <taxon>Pseudomonadota</taxon>
        <taxon>Alphaproteobacteria</taxon>
        <taxon>Candidatus Pelagibacterales</taxon>
        <taxon>Candidatus Pelagibacteraceae</taxon>
        <taxon>Candidatus Pelagibacter</taxon>
    </lineage>
</organism>
<name>METK_PELUB</name>
<reference key="1">
    <citation type="journal article" date="2005" name="Science">
        <title>Genome streamlining in a cosmopolitan oceanic bacterium.</title>
        <authorList>
            <person name="Giovannoni S.J."/>
            <person name="Tripp H.J."/>
            <person name="Givan S."/>
            <person name="Podar M."/>
            <person name="Vergin K.L."/>
            <person name="Baptista D."/>
            <person name="Bibbs L."/>
            <person name="Eads J."/>
            <person name="Richardson T.H."/>
            <person name="Noordewier M."/>
            <person name="Rappe M.S."/>
            <person name="Short J.M."/>
            <person name="Carrington J.C."/>
            <person name="Mathur E.J."/>
        </authorList>
    </citation>
    <scope>NUCLEOTIDE SEQUENCE [LARGE SCALE GENOMIC DNA]</scope>
    <source>
        <strain>HTCC1062</strain>
    </source>
</reference>
<keyword id="KW-0067">ATP-binding</keyword>
<keyword id="KW-0963">Cytoplasm</keyword>
<keyword id="KW-0460">Magnesium</keyword>
<keyword id="KW-0479">Metal-binding</keyword>
<keyword id="KW-0547">Nucleotide-binding</keyword>
<keyword id="KW-0554">One-carbon metabolism</keyword>
<keyword id="KW-0630">Potassium</keyword>
<keyword id="KW-1185">Reference proteome</keyword>
<keyword id="KW-0808">Transferase</keyword>
<evidence type="ECO:0000255" key="1">
    <source>
        <dbReference type="HAMAP-Rule" id="MF_00086"/>
    </source>
</evidence>
<proteinExistence type="inferred from homology"/>
<gene>
    <name evidence="1" type="primary">metK</name>
    <name type="ordered locus">SAR11_0387</name>
</gene>
<protein>
    <recommendedName>
        <fullName evidence="1">S-adenosylmethionine synthase</fullName>
        <shortName evidence="1">AdoMet synthase</shortName>
        <ecNumber evidence="1">2.5.1.6</ecNumber>
    </recommendedName>
    <alternativeName>
        <fullName evidence="1">MAT</fullName>
    </alternativeName>
    <alternativeName>
        <fullName evidence="1">Methionine adenosyltransferase</fullName>
    </alternativeName>
</protein>